<comment type="function">
    <text evidence="5 6">Polygalacturonase involved in cell separation in the final stages of pod shatter and in anther dehiscence. Not involved in floral organ abscission.</text>
</comment>
<comment type="catalytic activity">
    <reaction>
        <text>(1,4-alpha-D-galacturonosyl)n+m + H2O = (1,4-alpha-D-galacturonosyl)n + (1,4-alpha-D-galacturonosyl)m.</text>
        <dbReference type="EC" id="3.2.1.15"/>
    </reaction>
</comment>
<comment type="subcellular location">
    <subcellularLocation>
        <location evidence="3">Secreted</location>
        <location evidence="3">Cell wall</location>
    </subcellularLocation>
    <subcellularLocation>
        <location evidence="3">Cytoplasm</location>
    </subcellularLocation>
    <text>Released to the cell wall during maturation of the dehiscence zone.</text>
</comment>
<comment type="tissue specificity">
    <text evidence="3 4 5 6 7">Expressed in flower buds and siliques, in the dehiscence zone of anthers (stomium cells) and maturing siliques. Expressed in stigma during pollen tube growth. Not expressed in seeds or in the floral part or leaf abscission zone but found at the junction between the seed and the funiculus at the site of seed abscission.</text>
</comment>
<comment type="disruption phenotype">
    <text evidence="6">Impaired pod shatter.</text>
</comment>
<comment type="similarity">
    <text evidence="8">Belongs to the glycosyl hydrolase 28 family.</text>
</comment>
<dbReference type="EC" id="3.2.1.15"/>
<dbReference type="EMBL" id="AF037367">
    <property type="protein sequence ID" value="AAC98923.1"/>
    <property type="molecule type" value="Genomic_DNA"/>
</dbReference>
<dbReference type="EMBL" id="AJ002532">
    <property type="protein sequence ID" value="CAA05525.1"/>
    <property type="molecule type" value="Genomic_DNA"/>
</dbReference>
<dbReference type="EMBL" id="AL133248">
    <property type="protein sequence ID" value="CAB66108.1"/>
    <property type="molecule type" value="Genomic_DNA"/>
</dbReference>
<dbReference type="EMBL" id="CP002686">
    <property type="protein sequence ID" value="AEE79664.1"/>
    <property type="molecule type" value="Genomic_DNA"/>
</dbReference>
<dbReference type="EMBL" id="AK117942">
    <property type="protein sequence ID" value="BAC42580.1"/>
    <property type="molecule type" value="mRNA"/>
</dbReference>
<dbReference type="EMBL" id="BT005376">
    <property type="protein sequence ID" value="AAO63440.1"/>
    <property type="molecule type" value="mRNA"/>
</dbReference>
<dbReference type="PIR" id="T46187">
    <property type="entry name" value="T46187"/>
</dbReference>
<dbReference type="RefSeq" id="NP_191310.1">
    <property type="nucleotide sequence ID" value="NM_115611.2"/>
</dbReference>
<dbReference type="SMR" id="O23147"/>
<dbReference type="FunCoup" id="O23147">
    <property type="interactions" value="137"/>
</dbReference>
<dbReference type="STRING" id="3702.O23147"/>
<dbReference type="CAZy" id="GH28">
    <property type="family name" value="Glycoside Hydrolase Family 28"/>
</dbReference>
<dbReference type="iPTMnet" id="O23147"/>
<dbReference type="PaxDb" id="3702-AT3G57510.1"/>
<dbReference type="ProteomicsDB" id="244799"/>
<dbReference type="EnsemblPlants" id="AT3G57510.1">
    <property type="protein sequence ID" value="AT3G57510.1"/>
    <property type="gene ID" value="AT3G57510"/>
</dbReference>
<dbReference type="GeneID" id="824918"/>
<dbReference type="Gramene" id="AT3G57510.1">
    <property type="protein sequence ID" value="AT3G57510.1"/>
    <property type="gene ID" value="AT3G57510"/>
</dbReference>
<dbReference type="KEGG" id="ath:AT3G57510"/>
<dbReference type="Araport" id="AT3G57510"/>
<dbReference type="TAIR" id="AT3G57510">
    <property type="gene designation" value="ADPG1"/>
</dbReference>
<dbReference type="eggNOG" id="ENOG502QRJW">
    <property type="taxonomic scope" value="Eukaryota"/>
</dbReference>
<dbReference type="HOGENOM" id="CLU_016031_2_3_1"/>
<dbReference type="InParanoid" id="O23147"/>
<dbReference type="OMA" id="FKPGANY"/>
<dbReference type="OrthoDB" id="187139at2759"/>
<dbReference type="PhylomeDB" id="O23147"/>
<dbReference type="BioCyc" id="ARA:AT3G57510-MONOMER"/>
<dbReference type="PRO" id="PR:O23147"/>
<dbReference type="Proteomes" id="UP000006548">
    <property type="component" value="Chromosome 3"/>
</dbReference>
<dbReference type="ExpressionAtlas" id="O23147">
    <property type="expression patterns" value="baseline and differential"/>
</dbReference>
<dbReference type="GO" id="GO:0005737">
    <property type="term" value="C:cytoplasm"/>
    <property type="evidence" value="ECO:0007669"/>
    <property type="project" value="UniProtKB-SubCell"/>
</dbReference>
<dbReference type="GO" id="GO:0005576">
    <property type="term" value="C:extracellular region"/>
    <property type="evidence" value="ECO:0007669"/>
    <property type="project" value="UniProtKB-KW"/>
</dbReference>
<dbReference type="GO" id="GO:0004650">
    <property type="term" value="F:polygalacturonase activity"/>
    <property type="evidence" value="ECO:0000314"/>
    <property type="project" value="TAIR"/>
</dbReference>
<dbReference type="GO" id="GO:0009901">
    <property type="term" value="P:anther dehiscence"/>
    <property type="evidence" value="ECO:0000315"/>
    <property type="project" value="TAIR"/>
</dbReference>
<dbReference type="GO" id="GO:0005975">
    <property type="term" value="P:carbohydrate metabolic process"/>
    <property type="evidence" value="ECO:0007669"/>
    <property type="project" value="InterPro"/>
</dbReference>
<dbReference type="GO" id="GO:0009830">
    <property type="term" value="P:cell wall modification involved in abscission"/>
    <property type="evidence" value="ECO:0000304"/>
    <property type="project" value="TAIR"/>
</dbReference>
<dbReference type="GO" id="GO:0010047">
    <property type="term" value="P:fruit dehiscence"/>
    <property type="evidence" value="ECO:0000315"/>
    <property type="project" value="TAIR"/>
</dbReference>
<dbReference type="FunFam" id="2.160.20.10:FF:000028">
    <property type="entry name" value="Polygalacturonase QRT2"/>
    <property type="match status" value="1"/>
</dbReference>
<dbReference type="Gene3D" id="2.160.20.10">
    <property type="entry name" value="Single-stranded right-handed beta-helix, Pectin lyase-like"/>
    <property type="match status" value="1"/>
</dbReference>
<dbReference type="InterPro" id="IPR000743">
    <property type="entry name" value="Glyco_hydro_28"/>
</dbReference>
<dbReference type="InterPro" id="IPR006626">
    <property type="entry name" value="PbH1"/>
</dbReference>
<dbReference type="InterPro" id="IPR012334">
    <property type="entry name" value="Pectin_lyas_fold"/>
</dbReference>
<dbReference type="InterPro" id="IPR011050">
    <property type="entry name" value="Pectin_lyase_fold/virulence"/>
</dbReference>
<dbReference type="PANTHER" id="PTHR31375">
    <property type="match status" value="1"/>
</dbReference>
<dbReference type="Pfam" id="PF00295">
    <property type="entry name" value="Glyco_hydro_28"/>
    <property type="match status" value="1"/>
</dbReference>
<dbReference type="SMART" id="SM00710">
    <property type="entry name" value="PbH1"/>
    <property type="match status" value="5"/>
</dbReference>
<dbReference type="SUPFAM" id="SSF51126">
    <property type="entry name" value="Pectin lyase-like"/>
    <property type="match status" value="1"/>
</dbReference>
<dbReference type="PROSITE" id="PS00502">
    <property type="entry name" value="POLYGALACTURONASE"/>
    <property type="match status" value="1"/>
</dbReference>
<protein>
    <recommendedName>
        <fullName>Polygalacturonase ADPG1</fullName>
        <shortName>AtADPG1</shortName>
        <shortName>PG ADPG1</shortName>
        <ecNumber>3.2.1.15</ecNumber>
    </recommendedName>
    <alternativeName>
        <fullName>Pectinase ADPG1</fullName>
    </alternativeName>
    <alternativeName>
        <fullName>Protein ARABIDOPSIS DEHISCENCE ZONE POLYGALACTURONASE 1</fullName>
    </alternativeName>
</protein>
<reference key="1">
    <citation type="journal article" date="1999" name="Plant Cell Environ.">
        <title>Dehiscence-related expression of an Arabidopsis thaliana gene encoding a polygalacturonase in transgenic plants of Brassica napus.</title>
        <authorList>
            <person name="Jenkins E.S."/>
            <person name="Paul W."/>
            <person name="Craze M."/>
            <person name="Whitelaw C.A."/>
            <person name="Weigand A."/>
            <person name="Roberts J.A."/>
        </authorList>
    </citation>
    <scope>NUCLEOTIDE SEQUENCE [GENOMIC DNA]</scope>
    <scope>TISSUE SPECIFICITY</scope>
    <source>
        <strain>cv. Landsberg erecta</strain>
    </source>
</reference>
<reference key="2">
    <citation type="journal article" date="2001" name="Plant Mol. Biol.">
        <title>Analysis of a dehiscence zone endo-polygalacturonase in oilseed rape (Brassica napus) and Arabidopsis thaliana: evidence for roles in cell separation in dehiscence and abscission zones, and in stylar tissues during pollen tube growth.</title>
        <authorList>
            <person name="Sander L."/>
            <person name="Child R."/>
            <person name="Ulvskov P."/>
            <person name="Albrechtsen M."/>
            <person name="Borkhardt B."/>
        </authorList>
    </citation>
    <scope>NUCLEOTIDE SEQUENCE [GENOMIC DNA]</scope>
    <scope>SUBCELLULAR LOCATION</scope>
    <scope>TISSUE SPECIFICITY</scope>
    <source>
        <strain>cv. Columbia</strain>
    </source>
</reference>
<reference key="3">
    <citation type="journal article" date="2000" name="Nature">
        <title>Sequence and analysis of chromosome 3 of the plant Arabidopsis thaliana.</title>
        <authorList>
            <person name="Salanoubat M."/>
            <person name="Lemcke K."/>
            <person name="Rieger M."/>
            <person name="Ansorge W."/>
            <person name="Unseld M."/>
            <person name="Fartmann B."/>
            <person name="Valle G."/>
            <person name="Bloecker H."/>
            <person name="Perez-Alonso M."/>
            <person name="Obermaier B."/>
            <person name="Delseny M."/>
            <person name="Boutry M."/>
            <person name="Grivell L.A."/>
            <person name="Mache R."/>
            <person name="Puigdomenech P."/>
            <person name="De Simone V."/>
            <person name="Choisne N."/>
            <person name="Artiguenave F."/>
            <person name="Robert C."/>
            <person name="Brottier P."/>
            <person name="Wincker P."/>
            <person name="Cattolico L."/>
            <person name="Weissenbach J."/>
            <person name="Saurin W."/>
            <person name="Quetier F."/>
            <person name="Schaefer M."/>
            <person name="Mueller-Auer S."/>
            <person name="Gabel C."/>
            <person name="Fuchs M."/>
            <person name="Benes V."/>
            <person name="Wurmbach E."/>
            <person name="Drzonek H."/>
            <person name="Erfle H."/>
            <person name="Jordan N."/>
            <person name="Bangert S."/>
            <person name="Wiedelmann R."/>
            <person name="Kranz H."/>
            <person name="Voss H."/>
            <person name="Holland R."/>
            <person name="Brandt P."/>
            <person name="Nyakatura G."/>
            <person name="Vezzi A."/>
            <person name="D'Angelo M."/>
            <person name="Pallavicini A."/>
            <person name="Toppo S."/>
            <person name="Simionati B."/>
            <person name="Conrad A."/>
            <person name="Hornischer K."/>
            <person name="Kauer G."/>
            <person name="Loehnert T.-H."/>
            <person name="Nordsiek G."/>
            <person name="Reichelt J."/>
            <person name="Scharfe M."/>
            <person name="Schoen O."/>
            <person name="Bargues M."/>
            <person name="Terol J."/>
            <person name="Climent J."/>
            <person name="Navarro P."/>
            <person name="Collado C."/>
            <person name="Perez-Perez A."/>
            <person name="Ottenwaelder B."/>
            <person name="Duchemin D."/>
            <person name="Cooke R."/>
            <person name="Laudie M."/>
            <person name="Berger-Llauro C."/>
            <person name="Purnelle B."/>
            <person name="Masuy D."/>
            <person name="de Haan M."/>
            <person name="Maarse A.C."/>
            <person name="Alcaraz J.-P."/>
            <person name="Cottet A."/>
            <person name="Casacuberta E."/>
            <person name="Monfort A."/>
            <person name="Argiriou A."/>
            <person name="Flores M."/>
            <person name="Liguori R."/>
            <person name="Vitale D."/>
            <person name="Mannhaupt G."/>
            <person name="Haase D."/>
            <person name="Schoof H."/>
            <person name="Rudd S."/>
            <person name="Zaccaria P."/>
            <person name="Mewes H.-W."/>
            <person name="Mayer K.F.X."/>
            <person name="Kaul S."/>
            <person name="Town C.D."/>
            <person name="Koo H.L."/>
            <person name="Tallon L.J."/>
            <person name="Jenkins J."/>
            <person name="Rooney T."/>
            <person name="Rizzo M."/>
            <person name="Walts A."/>
            <person name="Utterback T."/>
            <person name="Fujii C.Y."/>
            <person name="Shea T.P."/>
            <person name="Creasy T.H."/>
            <person name="Haas B."/>
            <person name="Maiti R."/>
            <person name="Wu D."/>
            <person name="Peterson J."/>
            <person name="Van Aken S."/>
            <person name="Pai G."/>
            <person name="Militscher J."/>
            <person name="Sellers P."/>
            <person name="Gill J.E."/>
            <person name="Feldblyum T.V."/>
            <person name="Preuss D."/>
            <person name="Lin X."/>
            <person name="Nierman W.C."/>
            <person name="Salzberg S.L."/>
            <person name="White O."/>
            <person name="Venter J.C."/>
            <person name="Fraser C.M."/>
            <person name="Kaneko T."/>
            <person name="Nakamura Y."/>
            <person name="Sato S."/>
            <person name="Kato T."/>
            <person name="Asamizu E."/>
            <person name="Sasamoto S."/>
            <person name="Kimura T."/>
            <person name="Idesawa K."/>
            <person name="Kawashima K."/>
            <person name="Kishida Y."/>
            <person name="Kiyokawa C."/>
            <person name="Kohara M."/>
            <person name="Matsumoto M."/>
            <person name="Matsuno A."/>
            <person name="Muraki A."/>
            <person name="Nakayama S."/>
            <person name="Nakazaki N."/>
            <person name="Shinpo S."/>
            <person name="Takeuchi C."/>
            <person name="Wada T."/>
            <person name="Watanabe A."/>
            <person name="Yamada M."/>
            <person name="Yasuda M."/>
            <person name="Tabata S."/>
        </authorList>
    </citation>
    <scope>NUCLEOTIDE SEQUENCE [LARGE SCALE GENOMIC DNA]</scope>
    <source>
        <strain>cv. Columbia</strain>
    </source>
</reference>
<reference key="4">
    <citation type="journal article" date="2017" name="Plant J.">
        <title>Araport11: a complete reannotation of the Arabidopsis thaliana reference genome.</title>
        <authorList>
            <person name="Cheng C.Y."/>
            <person name="Krishnakumar V."/>
            <person name="Chan A.P."/>
            <person name="Thibaud-Nissen F."/>
            <person name="Schobel S."/>
            <person name="Town C.D."/>
        </authorList>
    </citation>
    <scope>GENOME REANNOTATION</scope>
    <source>
        <strain>cv. Columbia</strain>
    </source>
</reference>
<reference key="5">
    <citation type="journal article" date="2002" name="Science">
        <title>Functional annotation of a full-length Arabidopsis cDNA collection.</title>
        <authorList>
            <person name="Seki M."/>
            <person name="Narusaka M."/>
            <person name="Kamiya A."/>
            <person name="Ishida J."/>
            <person name="Satou M."/>
            <person name="Sakurai T."/>
            <person name="Nakajima M."/>
            <person name="Enju A."/>
            <person name="Akiyama K."/>
            <person name="Oono Y."/>
            <person name="Muramatsu M."/>
            <person name="Hayashizaki Y."/>
            <person name="Kawai J."/>
            <person name="Carninci P."/>
            <person name="Itoh M."/>
            <person name="Ishii Y."/>
            <person name="Arakawa T."/>
            <person name="Shibata K."/>
            <person name="Shinagawa A."/>
            <person name="Shinozaki K."/>
        </authorList>
    </citation>
    <scope>NUCLEOTIDE SEQUENCE [LARGE SCALE MRNA]</scope>
    <source>
        <strain>cv. Columbia</strain>
    </source>
</reference>
<reference key="6">
    <citation type="journal article" date="2003" name="Science">
        <title>Empirical analysis of transcriptional activity in the Arabidopsis genome.</title>
        <authorList>
            <person name="Yamada K."/>
            <person name="Lim J."/>
            <person name="Dale J.M."/>
            <person name="Chen H."/>
            <person name="Shinn P."/>
            <person name="Palm C.J."/>
            <person name="Southwick A.M."/>
            <person name="Wu H.C."/>
            <person name="Kim C.J."/>
            <person name="Nguyen M."/>
            <person name="Pham P.K."/>
            <person name="Cheuk R.F."/>
            <person name="Karlin-Newmann G."/>
            <person name="Liu S.X."/>
            <person name="Lam B."/>
            <person name="Sakano H."/>
            <person name="Wu T."/>
            <person name="Yu G."/>
            <person name="Miranda M."/>
            <person name="Quach H.L."/>
            <person name="Tripp M."/>
            <person name="Chang C.H."/>
            <person name="Lee J.M."/>
            <person name="Toriumi M.J."/>
            <person name="Chan M.M."/>
            <person name="Tang C.C."/>
            <person name="Onodera C.S."/>
            <person name="Deng J.M."/>
            <person name="Akiyama K."/>
            <person name="Ansari Y."/>
            <person name="Arakawa T."/>
            <person name="Banh J."/>
            <person name="Banno F."/>
            <person name="Bowser L."/>
            <person name="Brooks S.Y."/>
            <person name="Carninci P."/>
            <person name="Chao Q."/>
            <person name="Choy N."/>
            <person name="Enju A."/>
            <person name="Goldsmith A.D."/>
            <person name="Gurjal M."/>
            <person name="Hansen N.F."/>
            <person name="Hayashizaki Y."/>
            <person name="Johnson-Hopson C."/>
            <person name="Hsuan V.W."/>
            <person name="Iida K."/>
            <person name="Karnes M."/>
            <person name="Khan S."/>
            <person name="Koesema E."/>
            <person name="Ishida J."/>
            <person name="Jiang P.X."/>
            <person name="Jones T."/>
            <person name="Kawai J."/>
            <person name="Kamiya A."/>
            <person name="Meyers C."/>
            <person name="Nakajima M."/>
            <person name="Narusaka M."/>
            <person name="Seki M."/>
            <person name="Sakurai T."/>
            <person name="Satou M."/>
            <person name="Tamse R."/>
            <person name="Vaysberg M."/>
            <person name="Wallender E.K."/>
            <person name="Wong C."/>
            <person name="Yamamura Y."/>
            <person name="Yuan S."/>
            <person name="Shinozaki K."/>
            <person name="Davis R.W."/>
            <person name="Theologis A."/>
            <person name="Ecker J.R."/>
        </authorList>
    </citation>
    <scope>NUCLEOTIDE SEQUENCE [LARGE SCALE MRNA]</scope>
    <source>
        <strain>cv. Columbia</strain>
    </source>
</reference>
<reference key="7">
    <citation type="journal article" date="2006" name="Genome Biol.">
        <title>Patterns of expansion and expression divergence in the plant polygalacturonase gene family.</title>
        <authorList>
            <person name="Kim J."/>
            <person name="Shiu S.-H."/>
            <person name="Thoma S."/>
            <person name="Li W.-H."/>
            <person name="Patterson S.E."/>
        </authorList>
    </citation>
    <scope>TISSUE SPECIFICITY</scope>
</reference>
<reference key="8">
    <citation type="journal article" date="2007" name="J. Exp. Bot.">
        <title>Expression of polygalacturonases and evidence to support their role during cell separation processes in Arabidopsis thaliana.</title>
        <authorList>
            <person name="Gonzalez-Carranza Z.H."/>
            <person name="Elliott K.A."/>
            <person name="Roberts J.A."/>
        </authorList>
    </citation>
    <scope>FUNCTION</scope>
    <scope>TISSUE SPECIFICITY</scope>
</reference>
<reference key="9">
    <citation type="journal article" date="2009" name="Plant Cell">
        <title>ARABIDOPSIS DEHISCENCE ZONE POLYGALACTURONASE1 (ADPG1), ADPG2, and QUARTET2 are polygalacturonases required for cell separation during reproductive development in Arabidopsis.</title>
        <authorList>
            <person name="Ogawa M."/>
            <person name="Kay P."/>
            <person name="Wilson S."/>
            <person name="Swain S.M."/>
        </authorList>
    </citation>
    <scope>FUNCTION</scope>
    <scope>TISSUE SPECIFICITY</scope>
    <scope>DISRUPTION PHENOTYPE</scope>
</reference>
<proteinExistence type="evidence at transcript level"/>
<gene>
    <name type="primary">ADPG1</name>
    <name type="synonym">PGDZAT</name>
    <name type="synonym">SAC70</name>
    <name type="ordered locus">At3g57510</name>
    <name type="ORF">T8H10.110</name>
</gene>
<feature type="signal peptide" evidence="1">
    <location>
        <begin position="1"/>
        <end position="23"/>
    </location>
</feature>
<feature type="chain" id="PRO_0000367913" description="Polygalacturonase ADPG1">
    <location>
        <begin position="24"/>
        <end position="431"/>
    </location>
</feature>
<feature type="repeat" description="PbH1 1">
    <location>
        <begin position="223"/>
        <end position="249"/>
    </location>
</feature>
<feature type="repeat" description="PbH1 2">
    <location>
        <begin position="250"/>
        <end position="271"/>
    </location>
</feature>
<feature type="repeat" description="PbH1 3">
    <location>
        <begin position="303"/>
        <end position="324"/>
    </location>
</feature>
<feature type="repeat" description="PbH1 4">
    <location>
        <begin position="332"/>
        <end position="353"/>
    </location>
</feature>
<feature type="repeat" description="PbH1 5">
    <location>
        <begin position="398"/>
        <end position="420"/>
    </location>
</feature>
<feature type="active site" description="Proton donor" evidence="2">
    <location>
        <position position="264"/>
    </location>
</feature>
<feature type="active site" evidence="2">
    <location>
        <position position="287"/>
    </location>
</feature>
<name>ADPG1_ARATH</name>
<evidence type="ECO:0000255" key="1"/>
<evidence type="ECO:0000255" key="2">
    <source>
        <dbReference type="PROSITE-ProRule" id="PRU10052"/>
    </source>
</evidence>
<evidence type="ECO:0000269" key="3">
    <source>
    </source>
</evidence>
<evidence type="ECO:0000269" key="4">
    <source>
    </source>
</evidence>
<evidence type="ECO:0000269" key="5">
    <source>
    </source>
</evidence>
<evidence type="ECO:0000269" key="6">
    <source>
    </source>
</evidence>
<evidence type="ECO:0000269" key="7">
    <source ref="1"/>
</evidence>
<evidence type="ECO:0000305" key="8"/>
<keyword id="KW-0134">Cell wall</keyword>
<keyword id="KW-0961">Cell wall biogenesis/degradation</keyword>
<keyword id="KW-0963">Cytoplasm</keyword>
<keyword id="KW-0326">Glycosidase</keyword>
<keyword id="KW-0378">Hydrolase</keyword>
<keyword id="KW-1185">Reference proteome</keyword>
<keyword id="KW-0677">Repeat</keyword>
<keyword id="KW-0964">Secreted</keyword>
<keyword id="KW-0732">Signal</keyword>
<sequence>MARCCRHLAVFLCVLLMLSLCKALSSNVDDGYGHEDGSFESDSLLKLNNDDVLSLISSDETTLEASTVSVSNFGAKGDGKTDDTQAFKKAWKKACSTNGVTTFLVPKGKTYLLKSTRFRGPCKSLRNFQILGTLSASTKRSDYKDKNHWLILEDVNNLSIDGGSTGIINGNGKTWWQNSCKIDKSKPCTKAPTALTLYNLKNLNVKNLRVKNAQQIQISIEKCNKVEVSNVEITAPGDSPNTDGIHITNTQNIRVSNSDIGTGDDCISIEDGTQNLQIFDLTCGPGHGISIGSLGDDNSKAYVSGINVDGAKFSESDNGVRIKTYQGGSGTAKNIKFQNIRMENVKNPIIIDQDYCDKDKCEDQESAVQVKNVVYKNISGTSATDVAITLNCSEKYPCQGIVLENVKIKGGTASCKNANVKNQGTVSPKCS</sequence>
<accession>O23147</accession>
<organism>
    <name type="scientific">Arabidopsis thaliana</name>
    <name type="common">Mouse-ear cress</name>
    <dbReference type="NCBI Taxonomy" id="3702"/>
    <lineage>
        <taxon>Eukaryota</taxon>
        <taxon>Viridiplantae</taxon>
        <taxon>Streptophyta</taxon>
        <taxon>Embryophyta</taxon>
        <taxon>Tracheophyta</taxon>
        <taxon>Spermatophyta</taxon>
        <taxon>Magnoliopsida</taxon>
        <taxon>eudicotyledons</taxon>
        <taxon>Gunneridae</taxon>
        <taxon>Pentapetalae</taxon>
        <taxon>rosids</taxon>
        <taxon>malvids</taxon>
        <taxon>Brassicales</taxon>
        <taxon>Brassicaceae</taxon>
        <taxon>Camelineae</taxon>
        <taxon>Arabidopsis</taxon>
    </lineage>
</organism>